<proteinExistence type="inferred from homology"/>
<evidence type="ECO:0000255" key="1">
    <source>
        <dbReference type="HAMAP-Rule" id="MF_00009"/>
    </source>
</evidence>
<dbReference type="EC" id="3.1.-.-" evidence="1"/>
<dbReference type="EMBL" id="BA000040">
    <property type="protein sequence ID" value="BAC46058.1"/>
    <property type="molecule type" value="Genomic_DNA"/>
</dbReference>
<dbReference type="RefSeq" id="NP_767433.1">
    <property type="nucleotide sequence ID" value="NC_004463.1"/>
</dbReference>
<dbReference type="SMR" id="Q89W99"/>
<dbReference type="FunCoup" id="Q89W99">
    <property type="interactions" value="286"/>
</dbReference>
<dbReference type="STRING" id="224911.AAV28_00815"/>
<dbReference type="EnsemblBacteria" id="BAC46058">
    <property type="protein sequence ID" value="BAC46058"/>
    <property type="gene ID" value="BAC46058"/>
</dbReference>
<dbReference type="KEGG" id="bja:bll0793"/>
<dbReference type="PATRIC" id="fig|224911.5.peg.817"/>
<dbReference type="eggNOG" id="COG0319">
    <property type="taxonomic scope" value="Bacteria"/>
</dbReference>
<dbReference type="HOGENOM" id="CLU_106710_0_0_5"/>
<dbReference type="InParanoid" id="Q89W99"/>
<dbReference type="OrthoDB" id="9807740at2"/>
<dbReference type="PhylomeDB" id="Q89W99"/>
<dbReference type="Proteomes" id="UP000002526">
    <property type="component" value="Chromosome"/>
</dbReference>
<dbReference type="GO" id="GO:0005737">
    <property type="term" value="C:cytoplasm"/>
    <property type="evidence" value="ECO:0007669"/>
    <property type="project" value="UniProtKB-SubCell"/>
</dbReference>
<dbReference type="GO" id="GO:0004222">
    <property type="term" value="F:metalloendopeptidase activity"/>
    <property type="evidence" value="ECO:0007669"/>
    <property type="project" value="InterPro"/>
</dbReference>
<dbReference type="GO" id="GO:0004521">
    <property type="term" value="F:RNA endonuclease activity"/>
    <property type="evidence" value="ECO:0007669"/>
    <property type="project" value="UniProtKB-UniRule"/>
</dbReference>
<dbReference type="GO" id="GO:0008270">
    <property type="term" value="F:zinc ion binding"/>
    <property type="evidence" value="ECO:0007669"/>
    <property type="project" value="UniProtKB-UniRule"/>
</dbReference>
<dbReference type="GO" id="GO:0006364">
    <property type="term" value="P:rRNA processing"/>
    <property type="evidence" value="ECO:0007669"/>
    <property type="project" value="UniProtKB-UniRule"/>
</dbReference>
<dbReference type="Gene3D" id="3.40.390.30">
    <property type="entry name" value="Metalloproteases ('zincins'), catalytic domain"/>
    <property type="match status" value="1"/>
</dbReference>
<dbReference type="HAMAP" id="MF_00009">
    <property type="entry name" value="Endoribonucl_YbeY"/>
    <property type="match status" value="1"/>
</dbReference>
<dbReference type="InterPro" id="IPR023091">
    <property type="entry name" value="MetalPrtase_cat_dom_sf_prd"/>
</dbReference>
<dbReference type="InterPro" id="IPR002036">
    <property type="entry name" value="YbeY"/>
</dbReference>
<dbReference type="InterPro" id="IPR020549">
    <property type="entry name" value="YbeY_CS"/>
</dbReference>
<dbReference type="NCBIfam" id="TIGR00043">
    <property type="entry name" value="rRNA maturation RNase YbeY"/>
    <property type="match status" value="1"/>
</dbReference>
<dbReference type="PANTHER" id="PTHR46986">
    <property type="entry name" value="ENDORIBONUCLEASE YBEY, CHLOROPLASTIC"/>
    <property type="match status" value="1"/>
</dbReference>
<dbReference type="PANTHER" id="PTHR46986:SF1">
    <property type="entry name" value="ENDORIBONUCLEASE YBEY, CHLOROPLASTIC"/>
    <property type="match status" value="1"/>
</dbReference>
<dbReference type="Pfam" id="PF02130">
    <property type="entry name" value="YbeY"/>
    <property type="match status" value="1"/>
</dbReference>
<dbReference type="SUPFAM" id="SSF55486">
    <property type="entry name" value="Metalloproteases ('zincins'), catalytic domain"/>
    <property type="match status" value="1"/>
</dbReference>
<dbReference type="PROSITE" id="PS01306">
    <property type="entry name" value="UPF0054"/>
    <property type="match status" value="1"/>
</dbReference>
<feature type="chain" id="PRO_0000102422" description="Endoribonuclease YbeY">
    <location>
        <begin position="1"/>
        <end position="183"/>
    </location>
</feature>
<feature type="binding site" evidence="1">
    <location>
        <position position="140"/>
    </location>
    <ligand>
        <name>Zn(2+)</name>
        <dbReference type="ChEBI" id="CHEBI:29105"/>
        <note>catalytic</note>
    </ligand>
</feature>
<feature type="binding site" evidence="1">
    <location>
        <position position="144"/>
    </location>
    <ligand>
        <name>Zn(2+)</name>
        <dbReference type="ChEBI" id="CHEBI:29105"/>
        <note>catalytic</note>
    </ligand>
</feature>
<feature type="binding site" evidence="1">
    <location>
        <position position="150"/>
    </location>
    <ligand>
        <name>Zn(2+)</name>
        <dbReference type="ChEBI" id="CHEBI:29105"/>
        <note>catalytic</note>
    </ligand>
</feature>
<gene>
    <name evidence="1" type="primary">ybeY</name>
    <name type="ordered locus">bll0793</name>
</gene>
<accession>Q89W99</accession>
<reference key="1">
    <citation type="journal article" date="2002" name="DNA Res.">
        <title>Complete genomic sequence of nitrogen-fixing symbiotic bacterium Bradyrhizobium japonicum USDA110.</title>
        <authorList>
            <person name="Kaneko T."/>
            <person name="Nakamura Y."/>
            <person name="Sato S."/>
            <person name="Minamisawa K."/>
            <person name="Uchiumi T."/>
            <person name="Sasamoto S."/>
            <person name="Watanabe A."/>
            <person name="Idesawa K."/>
            <person name="Iriguchi M."/>
            <person name="Kawashima K."/>
            <person name="Kohara M."/>
            <person name="Matsumoto M."/>
            <person name="Shimpo S."/>
            <person name="Tsuruoka H."/>
            <person name="Wada T."/>
            <person name="Yamada M."/>
            <person name="Tabata S."/>
        </authorList>
    </citation>
    <scope>NUCLEOTIDE SEQUENCE [LARGE SCALE GENOMIC DNA]</scope>
    <source>
        <strain>JCM 10833 / BCRC 13528 / IAM 13628 / NBRC 14792 / USDA 110</strain>
    </source>
</reference>
<organism>
    <name type="scientific">Bradyrhizobium diazoefficiens (strain JCM 10833 / BCRC 13528 / IAM 13628 / NBRC 14792 / USDA 110)</name>
    <dbReference type="NCBI Taxonomy" id="224911"/>
    <lineage>
        <taxon>Bacteria</taxon>
        <taxon>Pseudomonadati</taxon>
        <taxon>Pseudomonadota</taxon>
        <taxon>Alphaproteobacteria</taxon>
        <taxon>Hyphomicrobiales</taxon>
        <taxon>Nitrobacteraceae</taxon>
        <taxon>Bradyrhizobium</taxon>
    </lineage>
</organism>
<sequence length="183" mass="20243">MGADASAFSFRTKTMSHPNLPMTEVLVVADCWQREPDSEAVIQRAVAAAAESVDEDVAEAEVAVMLTDDAGIRTLNSNWRGIDKPTNVLSFPALQPEGEWKEGDAPRMLGDIAIAYETMRREADEEKKPFDHHLSHLAVHGFLHLIGYDHENDDDAEEMEALETQILAHLGIPDPYADRPGTH</sequence>
<keyword id="KW-0963">Cytoplasm</keyword>
<keyword id="KW-0255">Endonuclease</keyword>
<keyword id="KW-0378">Hydrolase</keyword>
<keyword id="KW-0479">Metal-binding</keyword>
<keyword id="KW-0540">Nuclease</keyword>
<keyword id="KW-1185">Reference proteome</keyword>
<keyword id="KW-0690">Ribosome biogenesis</keyword>
<keyword id="KW-0698">rRNA processing</keyword>
<keyword id="KW-0862">Zinc</keyword>
<name>YBEY_BRADU</name>
<comment type="function">
    <text evidence="1">Single strand-specific metallo-endoribonuclease involved in late-stage 70S ribosome quality control and in maturation of the 3' terminus of the 16S rRNA.</text>
</comment>
<comment type="cofactor">
    <cofactor evidence="1">
        <name>Zn(2+)</name>
        <dbReference type="ChEBI" id="CHEBI:29105"/>
    </cofactor>
    <text evidence="1">Binds 1 zinc ion.</text>
</comment>
<comment type="subcellular location">
    <subcellularLocation>
        <location evidence="1">Cytoplasm</location>
    </subcellularLocation>
</comment>
<comment type="similarity">
    <text evidence="1">Belongs to the endoribonuclease YbeY family.</text>
</comment>
<protein>
    <recommendedName>
        <fullName evidence="1">Endoribonuclease YbeY</fullName>
        <ecNumber evidence="1">3.1.-.-</ecNumber>
    </recommendedName>
</protein>